<dbReference type="EC" id="2.7.6.1" evidence="1"/>
<dbReference type="EMBL" id="AE008384">
    <property type="protein sequence ID" value="AAM31901.1"/>
    <property type="molecule type" value="Genomic_DNA"/>
</dbReference>
<dbReference type="SMR" id="Q8PUX3"/>
<dbReference type="KEGG" id="mma:MM_2205"/>
<dbReference type="PATRIC" id="fig|192952.21.peg.2527"/>
<dbReference type="eggNOG" id="arCOG00067">
    <property type="taxonomic scope" value="Archaea"/>
</dbReference>
<dbReference type="HOGENOM" id="CLU_033546_2_2_2"/>
<dbReference type="UniPathway" id="UPA00087">
    <property type="reaction ID" value="UER00172"/>
</dbReference>
<dbReference type="Proteomes" id="UP000000595">
    <property type="component" value="Chromosome"/>
</dbReference>
<dbReference type="GO" id="GO:0005737">
    <property type="term" value="C:cytoplasm"/>
    <property type="evidence" value="ECO:0007669"/>
    <property type="project" value="UniProtKB-SubCell"/>
</dbReference>
<dbReference type="GO" id="GO:0002189">
    <property type="term" value="C:ribose phosphate diphosphokinase complex"/>
    <property type="evidence" value="ECO:0007669"/>
    <property type="project" value="TreeGrafter"/>
</dbReference>
<dbReference type="GO" id="GO:0005524">
    <property type="term" value="F:ATP binding"/>
    <property type="evidence" value="ECO:0007669"/>
    <property type="project" value="UniProtKB-KW"/>
</dbReference>
<dbReference type="GO" id="GO:0016301">
    <property type="term" value="F:kinase activity"/>
    <property type="evidence" value="ECO:0007669"/>
    <property type="project" value="UniProtKB-KW"/>
</dbReference>
<dbReference type="GO" id="GO:0000287">
    <property type="term" value="F:magnesium ion binding"/>
    <property type="evidence" value="ECO:0007669"/>
    <property type="project" value="UniProtKB-UniRule"/>
</dbReference>
<dbReference type="GO" id="GO:0004749">
    <property type="term" value="F:ribose phosphate diphosphokinase activity"/>
    <property type="evidence" value="ECO:0007669"/>
    <property type="project" value="UniProtKB-UniRule"/>
</dbReference>
<dbReference type="GO" id="GO:0006015">
    <property type="term" value="P:5-phosphoribose 1-diphosphate biosynthetic process"/>
    <property type="evidence" value="ECO:0007669"/>
    <property type="project" value="UniProtKB-UniRule"/>
</dbReference>
<dbReference type="GO" id="GO:0006164">
    <property type="term" value="P:purine nucleotide biosynthetic process"/>
    <property type="evidence" value="ECO:0007669"/>
    <property type="project" value="TreeGrafter"/>
</dbReference>
<dbReference type="CDD" id="cd06223">
    <property type="entry name" value="PRTases_typeI"/>
    <property type="match status" value="1"/>
</dbReference>
<dbReference type="FunFam" id="3.40.50.2020:FF:000074">
    <property type="entry name" value="Ribose-phosphate pyrophosphokinase"/>
    <property type="match status" value="1"/>
</dbReference>
<dbReference type="FunFam" id="3.40.50.2020:FF:000014">
    <property type="entry name" value="Ribose-phosphate pyrophosphokinase 1"/>
    <property type="match status" value="1"/>
</dbReference>
<dbReference type="Gene3D" id="3.40.50.2020">
    <property type="match status" value="2"/>
</dbReference>
<dbReference type="HAMAP" id="MF_00583_A">
    <property type="entry name" value="RibP_PPkinase_A"/>
    <property type="match status" value="1"/>
</dbReference>
<dbReference type="InterPro" id="IPR029099">
    <property type="entry name" value="Pribosyltran_N"/>
</dbReference>
<dbReference type="InterPro" id="IPR000836">
    <property type="entry name" value="PRibTrfase_dom"/>
</dbReference>
<dbReference type="InterPro" id="IPR029057">
    <property type="entry name" value="PRTase-like"/>
</dbReference>
<dbReference type="InterPro" id="IPR005946">
    <property type="entry name" value="Rib-P_diPkinase"/>
</dbReference>
<dbReference type="InterPro" id="IPR037514">
    <property type="entry name" value="Rib-P_diPkinase_arc"/>
</dbReference>
<dbReference type="NCBIfam" id="NF002095">
    <property type="entry name" value="PRK00934.1"/>
    <property type="match status" value="1"/>
</dbReference>
<dbReference type="NCBIfam" id="TIGR01251">
    <property type="entry name" value="ribP_PPkin"/>
    <property type="match status" value="1"/>
</dbReference>
<dbReference type="PANTHER" id="PTHR10210">
    <property type="entry name" value="RIBOSE-PHOSPHATE DIPHOSPHOKINASE FAMILY MEMBER"/>
    <property type="match status" value="1"/>
</dbReference>
<dbReference type="PANTHER" id="PTHR10210:SF32">
    <property type="entry name" value="RIBOSE-PHOSPHATE PYROPHOSPHOKINASE 2"/>
    <property type="match status" value="1"/>
</dbReference>
<dbReference type="Pfam" id="PF00156">
    <property type="entry name" value="Pribosyltran"/>
    <property type="match status" value="1"/>
</dbReference>
<dbReference type="Pfam" id="PF13793">
    <property type="entry name" value="Pribosyltran_N"/>
    <property type="match status" value="1"/>
</dbReference>
<dbReference type="SMART" id="SM01400">
    <property type="entry name" value="Pribosyltran_N"/>
    <property type="match status" value="1"/>
</dbReference>
<dbReference type="SUPFAM" id="SSF53271">
    <property type="entry name" value="PRTase-like"/>
    <property type="match status" value="1"/>
</dbReference>
<organism>
    <name type="scientific">Methanosarcina mazei (strain ATCC BAA-159 / DSM 3647 / Goe1 / Go1 / JCM 11833 / OCM 88)</name>
    <name type="common">Methanosarcina frisia</name>
    <dbReference type="NCBI Taxonomy" id="192952"/>
    <lineage>
        <taxon>Archaea</taxon>
        <taxon>Methanobacteriati</taxon>
        <taxon>Methanobacteriota</taxon>
        <taxon>Stenosarchaea group</taxon>
        <taxon>Methanomicrobia</taxon>
        <taxon>Methanosarcinales</taxon>
        <taxon>Methanosarcinaceae</taxon>
        <taxon>Methanosarcina</taxon>
    </lineage>
</organism>
<evidence type="ECO:0000255" key="1">
    <source>
        <dbReference type="HAMAP-Rule" id="MF_00583"/>
    </source>
</evidence>
<keyword id="KW-0067">ATP-binding</keyword>
<keyword id="KW-0963">Cytoplasm</keyword>
<keyword id="KW-0418">Kinase</keyword>
<keyword id="KW-0460">Magnesium</keyword>
<keyword id="KW-0479">Metal-binding</keyword>
<keyword id="KW-0545">Nucleotide biosynthesis</keyword>
<keyword id="KW-0547">Nucleotide-binding</keyword>
<keyword id="KW-0808">Transferase</keyword>
<accession>Q8PUX3</accession>
<reference key="1">
    <citation type="journal article" date="2002" name="J. Mol. Microbiol. Biotechnol.">
        <title>The genome of Methanosarcina mazei: evidence for lateral gene transfer between Bacteria and Archaea.</title>
        <authorList>
            <person name="Deppenmeier U."/>
            <person name="Johann A."/>
            <person name="Hartsch T."/>
            <person name="Merkl R."/>
            <person name="Schmitz R.A."/>
            <person name="Martinez-Arias R."/>
            <person name="Henne A."/>
            <person name="Wiezer A."/>
            <person name="Baeumer S."/>
            <person name="Jacobi C."/>
            <person name="Brueggemann H."/>
            <person name="Lienard T."/>
            <person name="Christmann A."/>
            <person name="Boemecke M."/>
            <person name="Steckel S."/>
            <person name="Bhattacharyya A."/>
            <person name="Lykidis A."/>
            <person name="Overbeek R."/>
            <person name="Klenk H.-P."/>
            <person name="Gunsalus R.P."/>
            <person name="Fritz H.-J."/>
            <person name="Gottschalk G."/>
        </authorList>
    </citation>
    <scope>NUCLEOTIDE SEQUENCE [LARGE SCALE GENOMIC DNA]</scope>
    <source>
        <strain>ATCC BAA-159 / DSM 3647 / Goe1 / Go1 / JCM 11833 / OCM 88</strain>
    </source>
</reference>
<comment type="function">
    <text evidence="1">Involved in the biosynthesis of the central metabolite phospho-alpha-D-ribosyl-1-pyrophosphate (PRPP) via the transfer of pyrophosphoryl group from ATP to 1-hydroxyl of ribose-5-phosphate (Rib-5-P).</text>
</comment>
<comment type="catalytic activity">
    <reaction evidence="1">
        <text>D-ribose 5-phosphate + ATP = 5-phospho-alpha-D-ribose 1-diphosphate + AMP + H(+)</text>
        <dbReference type="Rhea" id="RHEA:15609"/>
        <dbReference type="ChEBI" id="CHEBI:15378"/>
        <dbReference type="ChEBI" id="CHEBI:30616"/>
        <dbReference type="ChEBI" id="CHEBI:58017"/>
        <dbReference type="ChEBI" id="CHEBI:78346"/>
        <dbReference type="ChEBI" id="CHEBI:456215"/>
        <dbReference type="EC" id="2.7.6.1"/>
    </reaction>
</comment>
<comment type="cofactor">
    <cofactor evidence="1">
        <name>Mg(2+)</name>
        <dbReference type="ChEBI" id="CHEBI:18420"/>
    </cofactor>
    <text evidence="1">Binds 2 Mg(2+) ions per subunit.</text>
</comment>
<comment type="pathway">
    <text evidence="1">Metabolic intermediate biosynthesis; 5-phospho-alpha-D-ribose 1-diphosphate biosynthesis; 5-phospho-alpha-D-ribose 1-diphosphate from D-ribose 5-phosphate (route I): step 1/1.</text>
</comment>
<comment type="subcellular location">
    <subcellularLocation>
        <location evidence="1">Cytoplasm</location>
    </subcellularLocation>
</comment>
<comment type="similarity">
    <text evidence="1">Belongs to the ribose-phosphate pyrophosphokinase family. Class III (archaeal) subfamily.</text>
</comment>
<sequence length="295" mass="31877">MEYIKTATEVYILKIIGGPASQLLASRTARALGTEPVLCEFNRFPDGELYLRIAEEIENEKVTLIQSTPTDSDFVALLQLIDACEGAAEINVVIPYMGYARQDKKFKSGEPVSARAIARCINADRVFTINIHEKSVLEHFPCPAENLDAAALIGSYVAGFGLERPMLVAPDEGARGLVKNVASGHGFDHDHLQKTRLSGDTVVIKTKNLDVTGRHVVLVDDMIATGGTMAESIRMLKSQGAIDVHLACVHPVLTRNAALRLFHAGVKDIIGTDTLEKAESKLSVAPLIAEALSGY</sequence>
<name>KPRS_METMA</name>
<gene>
    <name evidence="1" type="primary">prs</name>
    <name type="ordered locus">MM_2205</name>
</gene>
<protein>
    <recommendedName>
        <fullName evidence="1">Ribose-phosphate pyrophosphokinase</fullName>
        <shortName evidence="1">RPPK</shortName>
        <ecNumber evidence="1">2.7.6.1</ecNumber>
    </recommendedName>
    <alternativeName>
        <fullName evidence="1">5-phospho-D-ribosyl alpha-1-diphosphate synthase</fullName>
    </alternativeName>
    <alternativeName>
        <fullName evidence="1">Phosphoribosyl diphosphate synthase</fullName>
    </alternativeName>
    <alternativeName>
        <fullName evidence="1">Phosphoribosyl pyrophosphate synthase</fullName>
        <shortName evidence="1">P-Rib-PP synthase</shortName>
        <shortName evidence="1">PRPP synthase</shortName>
        <shortName evidence="1">PRPPase</shortName>
    </alternativeName>
</protein>
<feature type="chain" id="PRO_0000141240" description="Ribose-phosphate pyrophosphokinase">
    <location>
        <begin position="1"/>
        <end position="295"/>
    </location>
</feature>
<feature type="active site" evidence="1">
    <location>
        <position position="194"/>
    </location>
</feature>
<feature type="binding site" evidence="1">
    <location>
        <begin position="46"/>
        <end position="48"/>
    </location>
    <ligand>
        <name>ATP</name>
        <dbReference type="ChEBI" id="CHEBI:30616"/>
    </ligand>
</feature>
<feature type="binding site" evidence="1">
    <location>
        <begin position="101"/>
        <end position="102"/>
    </location>
    <ligand>
        <name>ATP</name>
        <dbReference type="ChEBI" id="CHEBI:30616"/>
    </ligand>
</feature>
<feature type="binding site" evidence="1">
    <location>
        <position position="132"/>
    </location>
    <ligand>
        <name>Mg(2+)</name>
        <dbReference type="ChEBI" id="CHEBI:18420"/>
        <label>1</label>
    </ligand>
</feature>
<feature type="binding site" evidence="1">
    <location>
        <position position="171"/>
    </location>
    <ligand>
        <name>Mg(2+)</name>
        <dbReference type="ChEBI" id="CHEBI:18420"/>
        <label>2</label>
    </ligand>
</feature>
<feature type="binding site" evidence="1">
    <location>
        <position position="196"/>
    </location>
    <ligand>
        <name>D-ribose 5-phosphate</name>
        <dbReference type="ChEBI" id="CHEBI:78346"/>
    </ligand>
</feature>
<feature type="binding site" evidence="1">
    <location>
        <position position="220"/>
    </location>
    <ligand>
        <name>D-ribose 5-phosphate</name>
        <dbReference type="ChEBI" id="CHEBI:78346"/>
    </ligand>
</feature>
<proteinExistence type="inferred from homology"/>